<organism>
    <name type="scientific">Pseudomonas aeruginosa (strain ATCC 15692 / DSM 22644 / CIP 104116 / JCM 14847 / LMG 12228 / 1C / PRS 101 / PAO1)</name>
    <dbReference type="NCBI Taxonomy" id="208964"/>
    <lineage>
        <taxon>Bacteria</taxon>
        <taxon>Pseudomonadati</taxon>
        <taxon>Pseudomonadota</taxon>
        <taxon>Gammaproteobacteria</taxon>
        <taxon>Pseudomonadales</taxon>
        <taxon>Pseudomonadaceae</taxon>
        <taxon>Pseudomonas</taxon>
    </lineage>
</organism>
<feature type="chain" id="PRO_0000181432" description="Probable nicotinate-nucleotide adenylyltransferase">
    <location>
        <begin position="1"/>
        <end position="214"/>
    </location>
</feature>
<feature type="strand" evidence="3">
    <location>
        <begin position="4"/>
        <end position="10"/>
    </location>
</feature>
<feature type="helix" evidence="3">
    <location>
        <begin position="17"/>
        <end position="30"/>
    </location>
</feature>
<feature type="strand" evidence="3">
    <location>
        <begin position="33"/>
        <end position="39"/>
    </location>
</feature>
<feature type="helix" evidence="3">
    <location>
        <begin position="44"/>
        <end position="46"/>
    </location>
</feature>
<feature type="helix" evidence="3">
    <location>
        <begin position="53"/>
        <end position="64"/>
    </location>
</feature>
<feature type="strand" evidence="3">
    <location>
        <begin position="70"/>
        <end position="72"/>
    </location>
</feature>
<feature type="helix" evidence="3">
    <location>
        <begin position="75"/>
        <end position="78"/>
    </location>
</feature>
<feature type="strand" evidence="3">
    <location>
        <begin position="79"/>
        <end position="82"/>
    </location>
</feature>
<feature type="helix" evidence="3">
    <location>
        <begin position="85"/>
        <end position="95"/>
    </location>
</feature>
<feature type="strand" evidence="3">
    <location>
        <begin position="101"/>
        <end position="107"/>
    </location>
</feature>
<feature type="helix" evidence="3">
    <location>
        <begin position="108"/>
        <end position="111"/>
    </location>
</feature>
<feature type="helix" evidence="3">
    <location>
        <begin position="112"/>
        <end position="116"/>
    </location>
</feature>
<feature type="helix" evidence="3">
    <location>
        <begin position="120"/>
        <end position="122"/>
    </location>
</feature>
<feature type="turn" evidence="3">
    <location>
        <begin position="124"/>
        <end position="126"/>
    </location>
</feature>
<feature type="strand" evidence="3">
    <location>
        <begin position="128"/>
        <end position="133"/>
    </location>
</feature>
<feature type="strand" evidence="3">
    <location>
        <begin position="135"/>
        <end position="137"/>
    </location>
</feature>
<feature type="helix" evidence="3">
    <location>
        <begin position="143"/>
        <end position="145"/>
    </location>
</feature>
<feature type="helix" evidence="3">
    <location>
        <begin position="146"/>
        <end position="152"/>
    </location>
</feature>
<feature type="helix" evidence="3">
    <location>
        <begin position="157"/>
        <end position="159"/>
    </location>
</feature>
<feature type="strand" evidence="3">
    <location>
        <begin position="162"/>
        <end position="164"/>
    </location>
</feature>
<feature type="strand" evidence="3">
    <location>
        <begin position="167"/>
        <end position="171"/>
    </location>
</feature>
<feature type="helix" evidence="3">
    <location>
        <begin position="179"/>
        <end position="187"/>
    </location>
</feature>
<feature type="helix" evidence="3">
    <location>
        <begin position="198"/>
        <end position="206"/>
    </location>
</feature>
<feature type="turn" evidence="3">
    <location>
        <begin position="207"/>
        <end position="210"/>
    </location>
</feature>
<accession>Q9HX21</accession>
<reference key="1">
    <citation type="journal article" date="2000" name="Nature">
        <title>Complete genome sequence of Pseudomonas aeruginosa PAO1, an opportunistic pathogen.</title>
        <authorList>
            <person name="Stover C.K."/>
            <person name="Pham X.-Q.T."/>
            <person name="Erwin A.L."/>
            <person name="Mizoguchi S.D."/>
            <person name="Warrener P."/>
            <person name="Hickey M.J."/>
            <person name="Brinkman F.S.L."/>
            <person name="Hufnagle W.O."/>
            <person name="Kowalik D.J."/>
            <person name="Lagrou M."/>
            <person name="Garber R.L."/>
            <person name="Goltry L."/>
            <person name="Tolentino E."/>
            <person name="Westbrock-Wadman S."/>
            <person name="Yuan Y."/>
            <person name="Brody L.L."/>
            <person name="Coulter S.N."/>
            <person name="Folger K.R."/>
            <person name="Kas A."/>
            <person name="Larbig K."/>
            <person name="Lim R.M."/>
            <person name="Smith K.A."/>
            <person name="Spencer D.H."/>
            <person name="Wong G.K.-S."/>
            <person name="Wu Z."/>
            <person name="Paulsen I.T."/>
            <person name="Reizer J."/>
            <person name="Saier M.H. Jr."/>
            <person name="Hancock R.E.W."/>
            <person name="Lory S."/>
            <person name="Olson M.V."/>
        </authorList>
    </citation>
    <scope>NUCLEOTIDE SEQUENCE [LARGE SCALE GENOMIC DNA]</scope>
    <source>
        <strain>ATCC 15692 / DSM 22644 / CIP 104116 / JCM 14847 / LMG 12228 / 1C / PRS 101 / PAO1</strain>
    </source>
</reference>
<gene>
    <name type="primary">nadD</name>
    <name type="ordered locus">PA4006</name>
</gene>
<name>NADD_PSEAE</name>
<protein>
    <recommendedName>
        <fullName>Probable nicotinate-nucleotide adenylyltransferase</fullName>
        <ecNumber>2.7.7.18</ecNumber>
    </recommendedName>
    <alternativeName>
        <fullName>Deamido-NAD(+) diphosphorylase</fullName>
    </alternativeName>
    <alternativeName>
        <fullName>Deamido-NAD(+) pyrophosphorylase</fullName>
    </alternativeName>
    <alternativeName>
        <fullName>Nicotinate mononucleotide adenylyltransferase</fullName>
        <shortName>NaMN adenylyltransferase</shortName>
    </alternativeName>
</protein>
<evidence type="ECO:0000250" key="1"/>
<evidence type="ECO:0000305" key="2"/>
<evidence type="ECO:0007829" key="3">
    <source>
        <dbReference type="PDB" id="1YUM"/>
    </source>
</evidence>
<sequence length="214" mass="23801">MGKRIGLFGGTFDPVHIGHMRSAVEMAEQFALDELRLLPNARPPHRETPQVSAAQRLAMVERAVAGVERLTVDPRELQRDKPSYTIDTLESVRAELAADDQLFMLIGWDAFCGLPTWHRWEALLDHCHIVVLQRPDADSEPPESLRDLLAARSVADPQALKGPGGQITFVWQTPLAVSATQIRALLGAGRSVRFLVPDAVLNYIEAHHLYRAPH</sequence>
<comment type="function">
    <text evidence="1">Catalyzes the reversible adenylation of nicotinate mononucleotide (NaMN) to nicotinic acid adenine dinucleotide (NaAD).</text>
</comment>
<comment type="catalytic activity">
    <reaction>
        <text>nicotinate beta-D-ribonucleotide + ATP + H(+) = deamido-NAD(+) + diphosphate</text>
        <dbReference type="Rhea" id="RHEA:22860"/>
        <dbReference type="ChEBI" id="CHEBI:15378"/>
        <dbReference type="ChEBI" id="CHEBI:30616"/>
        <dbReference type="ChEBI" id="CHEBI:33019"/>
        <dbReference type="ChEBI" id="CHEBI:57502"/>
        <dbReference type="ChEBI" id="CHEBI:58437"/>
        <dbReference type="EC" id="2.7.7.18"/>
    </reaction>
</comment>
<comment type="pathway">
    <text>Cofactor biosynthesis; NAD(+) biosynthesis; deamido-NAD(+) from nicotinate D-ribonucleotide: step 1/1.</text>
</comment>
<comment type="similarity">
    <text evidence="2">Belongs to the NadD family.</text>
</comment>
<proteinExistence type="evidence at protein level"/>
<keyword id="KW-0002">3D-structure</keyword>
<keyword id="KW-0067">ATP-binding</keyword>
<keyword id="KW-0520">NAD</keyword>
<keyword id="KW-0547">Nucleotide-binding</keyword>
<keyword id="KW-0548">Nucleotidyltransferase</keyword>
<keyword id="KW-0662">Pyridine nucleotide biosynthesis</keyword>
<keyword id="KW-1185">Reference proteome</keyword>
<keyword id="KW-0808">Transferase</keyword>
<dbReference type="EC" id="2.7.7.18"/>
<dbReference type="EMBL" id="AE004091">
    <property type="protein sequence ID" value="AAG07393.1"/>
    <property type="molecule type" value="Genomic_DNA"/>
</dbReference>
<dbReference type="PIR" id="B83147">
    <property type="entry name" value="B83147"/>
</dbReference>
<dbReference type="RefSeq" id="NP_252695.1">
    <property type="nucleotide sequence ID" value="NC_002516.2"/>
</dbReference>
<dbReference type="RefSeq" id="WP_003093199.1">
    <property type="nucleotide sequence ID" value="NZ_QZGE01000038.1"/>
</dbReference>
<dbReference type="PDB" id="1YUL">
    <property type="method" value="X-ray"/>
    <property type="resolution" value="2.00 A"/>
    <property type="chains" value="A=1-214"/>
</dbReference>
<dbReference type="PDB" id="1YUM">
    <property type="method" value="X-ray"/>
    <property type="resolution" value="1.70 A"/>
    <property type="chains" value="A/B/C/D=1-214"/>
</dbReference>
<dbReference type="PDB" id="1YUN">
    <property type="method" value="X-ray"/>
    <property type="resolution" value="2.00 A"/>
    <property type="chains" value="A/B=1-214"/>
</dbReference>
<dbReference type="PDBsum" id="1YUL"/>
<dbReference type="PDBsum" id="1YUM"/>
<dbReference type="PDBsum" id="1YUN"/>
<dbReference type="SMR" id="Q9HX21"/>
<dbReference type="FunCoup" id="Q9HX21">
    <property type="interactions" value="386"/>
</dbReference>
<dbReference type="STRING" id="208964.PA4006"/>
<dbReference type="PaxDb" id="208964-PA4006"/>
<dbReference type="GeneID" id="878969"/>
<dbReference type="KEGG" id="pae:PA4006"/>
<dbReference type="PATRIC" id="fig|208964.12.peg.4198"/>
<dbReference type="PseudoCAP" id="PA4006"/>
<dbReference type="HOGENOM" id="CLU_069765_0_0_6"/>
<dbReference type="InParanoid" id="Q9HX21"/>
<dbReference type="OrthoDB" id="5295945at2"/>
<dbReference type="PhylomeDB" id="Q9HX21"/>
<dbReference type="BioCyc" id="PAER208964:G1FZ6-4079-MONOMER"/>
<dbReference type="BRENDA" id="2.7.7.18">
    <property type="organism ID" value="5087"/>
</dbReference>
<dbReference type="UniPathway" id="UPA00253">
    <property type="reaction ID" value="UER00332"/>
</dbReference>
<dbReference type="EvolutionaryTrace" id="Q9HX21"/>
<dbReference type="Proteomes" id="UP000002438">
    <property type="component" value="Chromosome"/>
</dbReference>
<dbReference type="GO" id="GO:0005524">
    <property type="term" value="F:ATP binding"/>
    <property type="evidence" value="ECO:0007669"/>
    <property type="project" value="UniProtKB-KW"/>
</dbReference>
<dbReference type="GO" id="GO:0000309">
    <property type="term" value="F:nicotinamide-nucleotide adenylyltransferase activity"/>
    <property type="evidence" value="ECO:0000318"/>
    <property type="project" value="GO_Central"/>
</dbReference>
<dbReference type="GO" id="GO:0004515">
    <property type="term" value="F:nicotinate-nucleotide adenylyltransferase activity"/>
    <property type="evidence" value="ECO:0000318"/>
    <property type="project" value="GO_Central"/>
</dbReference>
<dbReference type="GO" id="GO:0009435">
    <property type="term" value="P:NAD biosynthetic process"/>
    <property type="evidence" value="ECO:0000318"/>
    <property type="project" value="GO_Central"/>
</dbReference>
<dbReference type="CDD" id="cd02165">
    <property type="entry name" value="NMNAT"/>
    <property type="match status" value="1"/>
</dbReference>
<dbReference type="FunFam" id="3.40.50.620:FF:000291">
    <property type="entry name" value="Probable nicotinate-nucleotide adenylyltransferase"/>
    <property type="match status" value="1"/>
</dbReference>
<dbReference type="Gene3D" id="3.40.50.620">
    <property type="entry name" value="HUPs"/>
    <property type="match status" value="1"/>
</dbReference>
<dbReference type="HAMAP" id="MF_00244">
    <property type="entry name" value="NaMN_adenylyltr"/>
    <property type="match status" value="1"/>
</dbReference>
<dbReference type="InterPro" id="IPR004821">
    <property type="entry name" value="Cyt_trans-like"/>
</dbReference>
<dbReference type="InterPro" id="IPR005248">
    <property type="entry name" value="NadD/NMNAT"/>
</dbReference>
<dbReference type="InterPro" id="IPR014729">
    <property type="entry name" value="Rossmann-like_a/b/a_fold"/>
</dbReference>
<dbReference type="NCBIfam" id="TIGR00125">
    <property type="entry name" value="cyt_tran_rel"/>
    <property type="match status" value="1"/>
</dbReference>
<dbReference type="NCBIfam" id="TIGR00482">
    <property type="entry name" value="nicotinate (nicotinamide) nucleotide adenylyltransferase"/>
    <property type="match status" value="1"/>
</dbReference>
<dbReference type="NCBIfam" id="NF000839">
    <property type="entry name" value="PRK00071.1-1"/>
    <property type="match status" value="1"/>
</dbReference>
<dbReference type="NCBIfam" id="NF000840">
    <property type="entry name" value="PRK00071.1-3"/>
    <property type="match status" value="1"/>
</dbReference>
<dbReference type="PANTHER" id="PTHR39321">
    <property type="entry name" value="NICOTINATE-NUCLEOTIDE ADENYLYLTRANSFERASE-RELATED"/>
    <property type="match status" value="1"/>
</dbReference>
<dbReference type="PANTHER" id="PTHR39321:SF3">
    <property type="entry name" value="PHOSPHOPANTETHEINE ADENYLYLTRANSFERASE"/>
    <property type="match status" value="1"/>
</dbReference>
<dbReference type="Pfam" id="PF01467">
    <property type="entry name" value="CTP_transf_like"/>
    <property type="match status" value="1"/>
</dbReference>
<dbReference type="SUPFAM" id="SSF52374">
    <property type="entry name" value="Nucleotidylyl transferase"/>
    <property type="match status" value="1"/>
</dbReference>